<sequence>MTSEIHCDSLWYGADIVTMRDGKYHTLSNGAIATRDGKIVWLGEYDALPATLTADERVKFDGGIITPGFIDCHTHLVFGGNRSAEFEQRLNGVSYAEIAAQGGGIISTVKATRDADEERLLEQALFRLRPLLAEGVTCVEIKSGYGLTPESEMKMLRVARRLGELLPVEVKTTCLAAHALPPEYANRADDYIDLVCNTIIPQAAAAGLADAVDAFCEHLAFSPAQVARVFAAAEAAGLPVKLHAEQLSALGGSELAAQHHALSADHLEYATEQDARAMGDAGTVAVLLPGAYYLLRETQCPPVDLFRKHNVAMAIASDANPGTSPALSLRLMINMACTLFRLTPEEALAGVTTHAAKALGLQASHGTLETGKVADFIHWPLSRPAELAYWLGGQLPCTVIFRGEIRQ</sequence>
<gene>
    <name evidence="1" type="primary">hutI</name>
    <name type="ordered locus">Spro_2077</name>
</gene>
<protein>
    <recommendedName>
        <fullName evidence="1">Imidazolonepropionase</fullName>
        <ecNumber evidence="1">3.5.2.7</ecNumber>
    </recommendedName>
    <alternativeName>
        <fullName evidence="1">Imidazolone-5-propionate hydrolase</fullName>
    </alternativeName>
</protein>
<proteinExistence type="inferred from homology"/>
<evidence type="ECO:0000255" key="1">
    <source>
        <dbReference type="HAMAP-Rule" id="MF_00372"/>
    </source>
</evidence>
<keyword id="KW-0963">Cytoplasm</keyword>
<keyword id="KW-0369">Histidine metabolism</keyword>
<keyword id="KW-0378">Hydrolase</keyword>
<keyword id="KW-0408">Iron</keyword>
<keyword id="KW-0479">Metal-binding</keyword>
<keyword id="KW-0862">Zinc</keyword>
<organism>
    <name type="scientific">Serratia proteamaculans (strain 568)</name>
    <dbReference type="NCBI Taxonomy" id="399741"/>
    <lineage>
        <taxon>Bacteria</taxon>
        <taxon>Pseudomonadati</taxon>
        <taxon>Pseudomonadota</taxon>
        <taxon>Gammaproteobacteria</taxon>
        <taxon>Enterobacterales</taxon>
        <taxon>Yersiniaceae</taxon>
        <taxon>Serratia</taxon>
    </lineage>
</organism>
<accession>A8GDJ0</accession>
<name>HUTI_SERP5</name>
<comment type="function">
    <text evidence="1">Catalyzes the hydrolytic cleavage of the carbon-nitrogen bond in imidazolone-5-propanoate to yield N-formimidoyl-L-glutamate. It is the third step in the universal histidine degradation pathway.</text>
</comment>
<comment type="catalytic activity">
    <reaction evidence="1">
        <text>4-imidazolone-5-propanoate + H2O = N-formimidoyl-L-glutamate</text>
        <dbReference type="Rhea" id="RHEA:23660"/>
        <dbReference type="ChEBI" id="CHEBI:15377"/>
        <dbReference type="ChEBI" id="CHEBI:58928"/>
        <dbReference type="ChEBI" id="CHEBI:77893"/>
        <dbReference type="EC" id="3.5.2.7"/>
    </reaction>
</comment>
<comment type="cofactor">
    <cofactor evidence="1">
        <name>Zn(2+)</name>
        <dbReference type="ChEBI" id="CHEBI:29105"/>
    </cofactor>
    <cofactor evidence="1">
        <name>Fe(3+)</name>
        <dbReference type="ChEBI" id="CHEBI:29034"/>
    </cofactor>
    <text evidence="1">Binds 1 zinc or iron ion per subunit.</text>
</comment>
<comment type="pathway">
    <text evidence="1">Amino-acid degradation; L-histidine degradation into L-glutamate; N-formimidoyl-L-glutamate from L-histidine: step 3/3.</text>
</comment>
<comment type="subcellular location">
    <subcellularLocation>
        <location evidence="1">Cytoplasm</location>
    </subcellularLocation>
</comment>
<comment type="similarity">
    <text evidence="1">Belongs to the metallo-dependent hydrolases superfamily. HutI family.</text>
</comment>
<reference key="1">
    <citation type="submission" date="2007-09" db="EMBL/GenBank/DDBJ databases">
        <title>Complete sequence of chromosome of Serratia proteamaculans 568.</title>
        <authorList>
            <consortium name="US DOE Joint Genome Institute"/>
            <person name="Copeland A."/>
            <person name="Lucas S."/>
            <person name="Lapidus A."/>
            <person name="Barry K."/>
            <person name="Glavina del Rio T."/>
            <person name="Dalin E."/>
            <person name="Tice H."/>
            <person name="Pitluck S."/>
            <person name="Chain P."/>
            <person name="Malfatti S."/>
            <person name="Shin M."/>
            <person name="Vergez L."/>
            <person name="Schmutz J."/>
            <person name="Larimer F."/>
            <person name="Land M."/>
            <person name="Hauser L."/>
            <person name="Kyrpides N."/>
            <person name="Kim E."/>
            <person name="Taghavi S."/>
            <person name="Newman L."/>
            <person name="Vangronsveld J."/>
            <person name="van der Lelie D."/>
            <person name="Richardson P."/>
        </authorList>
    </citation>
    <scope>NUCLEOTIDE SEQUENCE [LARGE SCALE GENOMIC DNA]</scope>
    <source>
        <strain>568</strain>
    </source>
</reference>
<feature type="chain" id="PRO_1000059943" description="Imidazolonepropionase">
    <location>
        <begin position="1"/>
        <end position="407"/>
    </location>
</feature>
<feature type="binding site" evidence="1">
    <location>
        <position position="73"/>
    </location>
    <ligand>
        <name>Fe(3+)</name>
        <dbReference type="ChEBI" id="CHEBI:29034"/>
    </ligand>
</feature>
<feature type="binding site" evidence="1">
    <location>
        <position position="73"/>
    </location>
    <ligand>
        <name>Zn(2+)</name>
        <dbReference type="ChEBI" id="CHEBI:29105"/>
    </ligand>
</feature>
<feature type="binding site" evidence="1">
    <location>
        <position position="75"/>
    </location>
    <ligand>
        <name>Fe(3+)</name>
        <dbReference type="ChEBI" id="CHEBI:29034"/>
    </ligand>
</feature>
<feature type="binding site" evidence="1">
    <location>
        <position position="75"/>
    </location>
    <ligand>
        <name>Zn(2+)</name>
        <dbReference type="ChEBI" id="CHEBI:29105"/>
    </ligand>
</feature>
<feature type="binding site" evidence="1">
    <location>
        <position position="82"/>
    </location>
    <ligand>
        <name>4-imidazolone-5-propanoate</name>
        <dbReference type="ChEBI" id="CHEBI:77893"/>
    </ligand>
</feature>
<feature type="binding site" evidence="1">
    <location>
        <position position="145"/>
    </location>
    <ligand>
        <name>4-imidazolone-5-propanoate</name>
        <dbReference type="ChEBI" id="CHEBI:77893"/>
    </ligand>
</feature>
<feature type="binding site" evidence="1">
    <location>
        <position position="145"/>
    </location>
    <ligand>
        <name>N-formimidoyl-L-glutamate</name>
        <dbReference type="ChEBI" id="CHEBI:58928"/>
    </ligand>
</feature>
<feature type="binding site" evidence="1">
    <location>
        <position position="178"/>
    </location>
    <ligand>
        <name>4-imidazolone-5-propanoate</name>
        <dbReference type="ChEBI" id="CHEBI:77893"/>
    </ligand>
</feature>
<feature type="binding site" evidence="1">
    <location>
        <position position="243"/>
    </location>
    <ligand>
        <name>Fe(3+)</name>
        <dbReference type="ChEBI" id="CHEBI:29034"/>
    </ligand>
</feature>
<feature type="binding site" evidence="1">
    <location>
        <position position="243"/>
    </location>
    <ligand>
        <name>Zn(2+)</name>
        <dbReference type="ChEBI" id="CHEBI:29105"/>
    </ligand>
</feature>
<feature type="binding site" evidence="1">
    <location>
        <position position="246"/>
    </location>
    <ligand>
        <name>4-imidazolone-5-propanoate</name>
        <dbReference type="ChEBI" id="CHEBI:77893"/>
    </ligand>
</feature>
<feature type="binding site" evidence="1">
    <location>
        <position position="318"/>
    </location>
    <ligand>
        <name>Fe(3+)</name>
        <dbReference type="ChEBI" id="CHEBI:29034"/>
    </ligand>
</feature>
<feature type="binding site" evidence="1">
    <location>
        <position position="318"/>
    </location>
    <ligand>
        <name>Zn(2+)</name>
        <dbReference type="ChEBI" id="CHEBI:29105"/>
    </ligand>
</feature>
<feature type="binding site" evidence="1">
    <location>
        <position position="320"/>
    </location>
    <ligand>
        <name>N-formimidoyl-L-glutamate</name>
        <dbReference type="ChEBI" id="CHEBI:58928"/>
    </ligand>
</feature>
<feature type="binding site" evidence="1">
    <location>
        <position position="322"/>
    </location>
    <ligand>
        <name>N-formimidoyl-L-glutamate</name>
        <dbReference type="ChEBI" id="CHEBI:58928"/>
    </ligand>
</feature>
<feature type="binding site" evidence="1">
    <location>
        <position position="323"/>
    </location>
    <ligand>
        <name>4-imidazolone-5-propanoate</name>
        <dbReference type="ChEBI" id="CHEBI:77893"/>
    </ligand>
</feature>
<dbReference type="EC" id="3.5.2.7" evidence="1"/>
<dbReference type="EMBL" id="CP000826">
    <property type="protein sequence ID" value="ABV41180.1"/>
    <property type="molecule type" value="Genomic_DNA"/>
</dbReference>
<dbReference type="SMR" id="A8GDJ0"/>
<dbReference type="STRING" id="399741.Spro_2077"/>
<dbReference type="KEGG" id="spe:Spro_2077"/>
<dbReference type="eggNOG" id="COG1228">
    <property type="taxonomic scope" value="Bacteria"/>
</dbReference>
<dbReference type="HOGENOM" id="CLU_041647_0_0_6"/>
<dbReference type="OrthoDB" id="9776455at2"/>
<dbReference type="UniPathway" id="UPA00379">
    <property type="reaction ID" value="UER00551"/>
</dbReference>
<dbReference type="GO" id="GO:0005737">
    <property type="term" value="C:cytoplasm"/>
    <property type="evidence" value="ECO:0007669"/>
    <property type="project" value="UniProtKB-SubCell"/>
</dbReference>
<dbReference type="GO" id="GO:0050480">
    <property type="term" value="F:imidazolonepropionase activity"/>
    <property type="evidence" value="ECO:0007669"/>
    <property type="project" value="UniProtKB-UniRule"/>
</dbReference>
<dbReference type="GO" id="GO:0005506">
    <property type="term" value="F:iron ion binding"/>
    <property type="evidence" value="ECO:0007669"/>
    <property type="project" value="UniProtKB-UniRule"/>
</dbReference>
<dbReference type="GO" id="GO:0008270">
    <property type="term" value="F:zinc ion binding"/>
    <property type="evidence" value="ECO:0007669"/>
    <property type="project" value="UniProtKB-UniRule"/>
</dbReference>
<dbReference type="GO" id="GO:0019556">
    <property type="term" value="P:L-histidine catabolic process to glutamate and formamide"/>
    <property type="evidence" value="ECO:0007669"/>
    <property type="project" value="UniProtKB-UniPathway"/>
</dbReference>
<dbReference type="GO" id="GO:0019557">
    <property type="term" value="P:L-histidine catabolic process to glutamate and formate"/>
    <property type="evidence" value="ECO:0007669"/>
    <property type="project" value="UniProtKB-UniPathway"/>
</dbReference>
<dbReference type="CDD" id="cd01296">
    <property type="entry name" value="Imidazolone-5PH"/>
    <property type="match status" value="1"/>
</dbReference>
<dbReference type="FunFam" id="3.20.20.140:FF:000007">
    <property type="entry name" value="Imidazolonepropionase"/>
    <property type="match status" value="1"/>
</dbReference>
<dbReference type="Gene3D" id="3.20.20.140">
    <property type="entry name" value="Metal-dependent hydrolases"/>
    <property type="match status" value="1"/>
</dbReference>
<dbReference type="Gene3D" id="2.30.40.10">
    <property type="entry name" value="Urease, subunit C, domain 1"/>
    <property type="match status" value="1"/>
</dbReference>
<dbReference type="HAMAP" id="MF_00372">
    <property type="entry name" value="HutI"/>
    <property type="match status" value="1"/>
</dbReference>
<dbReference type="InterPro" id="IPR006680">
    <property type="entry name" value="Amidohydro-rel"/>
</dbReference>
<dbReference type="InterPro" id="IPR005920">
    <property type="entry name" value="HutI"/>
</dbReference>
<dbReference type="InterPro" id="IPR011059">
    <property type="entry name" value="Metal-dep_hydrolase_composite"/>
</dbReference>
<dbReference type="InterPro" id="IPR032466">
    <property type="entry name" value="Metal_Hydrolase"/>
</dbReference>
<dbReference type="NCBIfam" id="TIGR01224">
    <property type="entry name" value="hutI"/>
    <property type="match status" value="1"/>
</dbReference>
<dbReference type="PANTHER" id="PTHR42752">
    <property type="entry name" value="IMIDAZOLONEPROPIONASE"/>
    <property type="match status" value="1"/>
</dbReference>
<dbReference type="PANTHER" id="PTHR42752:SF1">
    <property type="entry name" value="IMIDAZOLONEPROPIONASE-RELATED"/>
    <property type="match status" value="1"/>
</dbReference>
<dbReference type="Pfam" id="PF01979">
    <property type="entry name" value="Amidohydro_1"/>
    <property type="match status" value="1"/>
</dbReference>
<dbReference type="SUPFAM" id="SSF51338">
    <property type="entry name" value="Composite domain of metallo-dependent hydrolases"/>
    <property type="match status" value="1"/>
</dbReference>
<dbReference type="SUPFAM" id="SSF51556">
    <property type="entry name" value="Metallo-dependent hydrolases"/>
    <property type="match status" value="1"/>
</dbReference>